<proteinExistence type="evidence at protein level"/>
<reference key="1">
    <citation type="journal article" date="1984" name="Gene">
        <title>Structural and functional organization of the gpt gene region of Escherichia coli.</title>
        <authorList>
            <person name="Nueesch J."/>
            <person name="Schuemperli D."/>
        </authorList>
    </citation>
    <scope>NUCLEOTIDE SEQUENCE [GENOMIC DNA]</scope>
</reference>
<reference key="2">
    <citation type="submission" date="1996-02" db="EMBL/GenBank/DDBJ databases">
        <title>Systematic sequencing of the Escherichia coli genome: analysis of the 4.0 - 6.0 min (189,987 - 281,416bp) region.</title>
        <authorList>
            <person name="Takemoto K."/>
            <person name="Mori H."/>
            <person name="Murayama N."/>
            <person name="Kataoka K."/>
            <person name="Yano M."/>
            <person name="Itoh T."/>
            <person name="Yamamoto Y."/>
            <person name="Inokuchi H."/>
            <person name="Miki T."/>
            <person name="Hatada E."/>
            <person name="Fukuda R."/>
            <person name="Ichihara S."/>
            <person name="Mizuno T."/>
            <person name="Makino K."/>
            <person name="Nakata A."/>
            <person name="Yura T."/>
            <person name="Sampei G."/>
            <person name="Mizobuchi K."/>
        </authorList>
    </citation>
    <scope>NUCLEOTIDE SEQUENCE [LARGE SCALE GENOMIC DNA]</scope>
    <source>
        <strain>K12 / W3110 / ATCC 27325 / DSM 5911</strain>
    </source>
</reference>
<reference key="3">
    <citation type="submission" date="1997-01" db="EMBL/GenBank/DDBJ databases">
        <title>Sequence of minutes 4-25 of Escherichia coli.</title>
        <authorList>
            <person name="Chung E."/>
            <person name="Allen E."/>
            <person name="Araujo R."/>
            <person name="Aparicio A.M."/>
            <person name="Davis K."/>
            <person name="Duncan M."/>
            <person name="Federspiel N."/>
            <person name="Hyman R."/>
            <person name="Kalman S."/>
            <person name="Komp C."/>
            <person name="Kurdi O."/>
            <person name="Lew H."/>
            <person name="Lin D."/>
            <person name="Namath A."/>
            <person name="Oefner P."/>
            <person name="Roberts D."/>
            <person name="Schramm S."/>
            <person name="Davis R.W."/>
        </authorList>
    </citation>
    <scope>NUCLEOTIDE SEQUENCE [LARGE SCALE GENOMIC DNA]</scope>
    <source>
        <strain>K12 / MG1655 / ATCC 47076</strain>
    </source>
</reference>
<reference key="4">
    <citation type="journal article" date="1997" name="Science">
        <title>The complete genome sequence of Escherichia coli K-12.</title>
        <authorList>
            <person name="Blattner F.R."/>
            <person name="Plunkett G. III"/>
            <person name="Bloch C.A."/>
            <person name="Perna N.T."/>
            <person name="Burland V."/>
            <person name="Riley M."/>
            <person name="Collado-Vides J."/>
            <person name="Glasner J.D."/>
            <person name="Rode C.K."/>
            <person name="Mayhew G.F."/>
            <person name="Gregor J."/>
            <person name="Davis N.W."/>
            <person name="Kirkpatrick H.A."/>
            <person name="Goeden M.A."/>
            <person name="Rose D.J."/>
            <person name="Mau B."/>
            <person name="Shao Y."/>
        </authorList>
    </citation>
    <scope>NUCLEOTIDE SEQUENCE [LARGE SCALE GENOMIC DNA]</scope>
    <source>
        <strain>K12 / MG1655 / ATCC 47076</strain>
    </source>
</reference>
<reference key="5">
    <citation type="journal article" date="2006" name="Mol. Syst. Biol.">
        <title>Highly accurate genome sequences of Escherichia coli K-12 strains MG1655 and W3110.</title>
        <authorList>
            <person name="Hayashi K."/>
            <person name="Morooka N."/>
            <person name="Yamamoto Y."/>
            <person name="Fujita K."/>
            <person name="Isono K."/>
            <person name="Choi S."/>
            <person name="Ohtsubo E."/>
            <person name="Baba T."/>
            <person name="Wanner B.L."/>
            <person name="Mori H."/>
            <person name="Horiuchi T."/>
        </authorList>
    </citation>
    <scope>NUCLEOTIDE SEQUENCE [LARGE SCALE GENOMIC DNA]</scope>
    <scope>SEQUENCE REVISION TO 242; 277-278 AND 397-414</scope>
    <source>
        <strain>K12 / W3110 / ATCC 27325 / DSM 5911</strain>
    </source>
</reference>
<reference key="6">
    <citation type="journal article" date="2004" name="J. Biol. Chem.">
        <title>A novel fermentation/respiration switch protein regulated by enzyme IIAGlc in Escherichia coli.</title>
        <authorList>
            <person name="Koo B.M."/>
            <person name="Yoon M.J."/>
            <person name="Lee C.R."/>
            <person name="Nam T.W."/>
            <person name="Choe Y.J."/>
            <person name="Jaffe H."/>
            <person name="Peterkofsky A."/>
            <person name="Seok Y.J."/>
        </authorList>
    </citation>
    <scope>IDENTIFICATION BY MASS SPECTROMETRY</scope>
    <scope>FUNCTION</scope>
    <scope>INTERACTION WITH IIAGLC</scope>
    <scope>OVEREXPRESSION</scope>
    <scope>DISRUPTION PHENOTYPE</scope>
    <source>
        <strain>K12 / MG1655 / ATCC 47076</strain>
    </source>
</reference>
<reference key="7">
    <citation type="journal article" date="2005" name="FEMS Microbiol. Rev.">
        <title>Enzyme genomics: application of general enzymatic screens to discover new enzymes.</title>
        <authorList>
            <person name="Kuznetsova E."/>
            <person name="Proudfoot M."/>
            <person name="Sanders S.A."/>
            <person name="Reinking J."/>
            <person name="Savchenko A."/>
            <person name="Arrowsmith C.H."/>
            <person name="Edwards A.M."/>
            <person name="Yakunin A.F."/>
        </authorList>
    </citation>
    <scope>FUNCTION AS AN ESTERASE</scope>
    <scope>CATALYTIC ACTIVITY</scope>
</reference>
<dbReference type="EC" id="3.1.1.1" evidence="1 3"/>
<dbReference type="EMBL" id="M13422">
    <property type="protein sequence ID" value="AAA23929.1"/>
    <property type="molecule type" value="Genomic_DNA"/>
</dbReference>
<dbReference type="EMBL" id="U00096">
    <property type="protein sequence ID" value="AAC73343.1"/>
    <property type="molecule type" value="Genomic_DNA"/>
</dbReference>
<dbReference type="EMBL" id="AP009048">
    <property type="protein sequence ID" value="BAA77908.2"/>
    <property type="molecule type" value="Genomic_DNA"/>
</dbReference>
<dbReference type="EMBL" id="U70214">
    <property type="protein sequence ID" value="AAB08659.1"/>
    <property type="molecule type" value="Genomic_DNA"/>
</dbReference>
<dbReference type="PIR" id="H64748">
    <property type="entry name" value="QQEC49"/>
</dbReference>
<dbReference type="RefSeq" id="NP_414774.1">
    <property type="nucleotide sequence ID" value="NC_000913.3"/>
</dbReference>
<dbReference type="RefSeq" id="WP_000189532.1">
    <property type="nucleotide sequence ID" value="NZ_SSZK01000050.1"/>
</dbReference>
<dbReference type="SMR" id="P04335"/>
<dbReference type="BioGRID" id="4261742">
    <property type="interactions" value="17"/>
</dbReference>
<dbReference type="BioGRID" id="850400">
    <property type="interactions" value="1"/>
</dbReference>
<dbReference type="DIP" id="DIP-11208N"/>
<dbReference type="FunCoup" id="P04335">
    <property type="interactions" value="45"/>
</dbReference>
<dbReference type="IntAct" id="P04335">
    <property type="interactions" value="7"/>
</dbReference>
<dbReference type="STRING" id="511145.b0239"/>
<dbReference type="ESTHER" id="ecoli-yafa">
    <property type="family name" value="Duf_1100-R"/>
</dbReference>
<dbReference type="jPOST" id="P04335"/>
<dbReference type="PaxDb" id="511145-b0239"/>
<dbReference type="EnsemblBacteria" id="AAC73343">
    <property type="protein sequence ID" value="AAC73343"/>
    <property type="gene ID" value="b0239"/>
</dbReference>
<dbReference type="GeneID" id="946039"/>
<dbReference type="KEGG" id="ecj:JW0229"/>
<dbReference type="KEGG" id="eco:b0239"/>
<dbReference type="KEGG" id="ecoc:C3026_01135"/>
<dbReference type="KEGG" id="ecoc:C3026_23870"/>
<dbReference type="PATRIC" id="fig|1411691.4.peg.2044"/>
<dbReference type="EchoBASE" id="EB1083"/>
<dbReference type="eggNOG" id="COG1073">
    <property type="taxonomic scope" value="Bacteria"/>
</dbReference>
<dbReference type="HOGENOM" id="CLU_036819_0_0_6"/>
<dbReference type="InParanoid" id="P04335"/>
<dbReference type="OMA" id="NIPWVDH"/>
<dbReference type="OrthoDB" id="5590073at2"/>
<dbReference type="PhylomeDB" id="P04335"/>
<dbReference type="BioCyc" id="EcoCyc:EG11091-MONOMER"/>
<dbReference type="BRENDA" id="3.1.1.1">
    <property type="organism ID" value="2026"/>
</dbReference>
<dbReference type="PRO" id="PR:P04335"/>
<dbReference type="Proteomes" id="UP000000625">
    <property type="component" value="Chromosome"/>
</dbReference>
<dbReference type="GO" id="GO:0106435">
    <property type="term" value="F:carboxylesterase activity"/>
    <property type="evidence" value="ECO:0007669"/>
    <property type="project" value="UniProtKB-EC"/>
</dbReference>
<dbReference type="GO" id="GO:0016787">
    <property type="term" value="F:hydrolase activity"/>
    <property type="evidence" value="ECO:0000314"/>
    <property type="project" value="EcoCyc"/>
</dbReference>
<dbReference type="GO" id="GO:0043470">
    <property type="term" value="P:regulation of carbohydrate catabolic process"/>
    <property type="evidence" value="ECO:0000315"/>
    <property type="project" value="EcoCyc"/>
</dbReference>
<dbReference type="FunFam" id="3.40.50.1820:FF:000022">
    <property type="entry name" value="Esterase FrsA"/>
    <property type="match status" value="1"/>
</dbReference>
<dbReference type="Gene3D" id="3.40.50.1820">
    <property type="entry name" value="alpha/beta hydrolase"/>
    <property type="match status" value="1"/>
</dbReference>
<dbReference type="HAMAP" id="MF_01063">
    <property type="entry name" value="FrsA"/>
    <property type="match status" value="1"/>
</dbReference>
<dbReference type="InterPro" id="IPR029058">
    <property type="entry name" value="AB_hydrolase_fold"/>
</dbReference>
<dbReference type="InterPro" id="IPR043423">
    <property type="entry name" value="FrsA"/>
</dbReference>
<dbReference type="InterPro" id="IPR010520">
    <property type="entry name" value="FrsA-like"/>
</dbReference>
<dbReference type="InterPro" id="IPR050261">
    <property type="entry name" value="FrsA_esterase"/>
</dbReference>
<dbReference type="NCBIfam" id="NF003460">
    <property type="entry name" value="PRK05077.1"/>
    <property type="match status" value="1"/>
</dbReference>
<dbReference type="PANTHER" id="PTHR22946">
    <property type="entry name" value="DIENELACTONE HYDROLASE DOMAIN-CONTAINING PROTEIN-RELATED"/>
    <property type="match status" value="1"/>
</dbReference>
<dbReference type="PANTHER" id="PTHR22946:SF4">
    <property type="entry name" value="ESTERASE FRSA"/>
    <property type="match status" value="1"/>
</dbReference>
<dbReference type="Pfam" id="PF06500">
    <property type="entry name" value="FrsA-like"/>
    <property type="match status" value="1"/>
</dbReference>
<dbReference type="SUPFAM" id="SSF53474">
    <property type="entry name" value="alpha/beta-Hydrolases"/>
    <property type="match status" value="1"/>
</dbReference>
<name>FRSA_ECOLI</name>
<evidence type="ECO:0000255" key="1">
    <source>
        <dbReference type="HAMAP-Rule" id="MF_01063"/>
    </source>
</evidence>
<evidence type="ECO:0000269" key="2">
    <source>
    </source>
</evidence>
<evidence type="ECO:0000269" key="3">
    <source>
    </source>
</evidence>
<evidence type="ECO:0000303" key="4">
    <source>
    </source>
</evidence>
<evidence type="ECO:0000305" key="5"/>
<feature type="chain" id="PRO_0000197151" description="Esterase FrsA">
    <location>
        <begin position="1"/>
        <end position="414"/>
    </location>
</feature>
<feature type="sequence conflict" description="In Ref. 1 and 2." evidence="5" ref="1 2">
    <original>T</original>
    <variation>S</variation>
    <location>
        <position position="242"/>
    </location>
</feature>
<feature type="sequence conflict" description="In Ref. 1 and 2." evidence="5" ref="1 2">
    <original>NV</original>
    <variation>TL</variation>
    <location>
        <begin position="277"/>
        <end position="278"/>
    </location>
</feature>
<feature type="sequence conflict" description="In Ref. 1 and 2." evidence="5" ref="1 2">
    <original>NFDKGLQEITDWIEKRLC</original>
    <variation>KILTKVFRKSPTGSKNACVKNLLNFANLVKQLHHNRR</variation>
    <location>
        <begin position="397"/>
        <end position="414"/>
    </location>
</feature>
<protein>
    <recommendedName>
        <fullName evidence="1 5">Esterase FrsA</fullName>
        <ecNumber evidence="1 3">3.1.1.1</ecNumber>
    </recommendedName>
    <alternativeName>
        <fullName evidence="4">Fermentation/respiration switch protein</fullName>
    </alternativeName>
</protein>
<comment type="function">
    <text evidence="2 3">Catalyzes the hydrolysis of esters (PubMed:15808744). Displays esterase activity toward pNP-butyrate (PubMed:15808744). May stimulate mixed-acid fermentation by acting as a fermentation/respiration switch that down-regulates respiration and up-regulates fermentation rates (PubMed:15169777).</text>
</comment>
<comment type="catalytic activity">
    <reaction evidence="1 3">
        <text>a carboxylic ester + H2O = an alcohol + a carboxylate + H(+)</text>
        <dbReference type="Rhea" id="RHEA:21164"/>
        <dbReference type="ChEBI" id="CHEBI:15377"/>
        <dbReference type="ChEBI" id="CHEBI:15378"/>
        <dbReference type="ChEBI" id="CHEBI:29067"/>
        <dbReference type="ChEBI" id="CHEBI:30879"/>
        <dbReference type="ChEBI" id="CHEBI:33308"/>
        <dbReference type="EC" id="3.1.1.1"/>
    </reaction>
</comment>
<comment type="subunit">
    <text evidence="2">Forms a 1:1 complex specifically with the unphosphorylated form of the EIIA component of the glucose-specific PTS system (IIAGlc).</text>
</comment>
<comment type="disruption phenotype">
    <text evidence="2">Deletion of the gene increases cell respiration rate on several sugars including glucose.</text>
</comment>
<comment type="miscellaneous">
    <text evidence="2">Increased expression results in an increased fermentation rate on sugars with the concomitant accumulation of mixed-acid fermentation products.</text>
</comment>
<comment type="similarity">
    <text evidence="1 5">Belongs to the FrsA family.</text>
</comment>
<gene>
    <name evidence="1 4" type="primary">frsA</name>
    <name type="synonym">yafA</name>
    <name type="ordered locus">b0239</name>
    <name type="ordered locus">JW0229</name>
</gene>
<organism>
    <name type="scientific">Escherichia coli (strain K12)</name>
    <dbReference type="NCBI Taxonomy" id="83333"/>
    <lineage>
        <taxon>Bacteria</taxon>
        <taxon>Pseudomonadati</taxon>
        <taxon>Pseudomonadota</taxon>
        <taxon>Gammaproteobacteria</taxon>
        <taxon>Enterobacterales</taxon>
        <taxon>Enterobacteriaceae</taxon>
        <taxon>Escherichia</taxon>
    </lineage>
</organism>
<accession>P04335</accession>
<accession>P77413</accession>
<keyword id="KW-0378">Hydrolase</keyword>
<keyword id="KW-1185">Reference proteome</keyword>
<keyword id="KW-0719">Serine esterase</keyword>
<sequence length="414" mass="47009">MTQANLSETLFKPRFKHPETSTLVRRFNHGAQPPVQSALDGKTIPHWYRMINRLMWIWRGIDPREILDVQARIVMSDAERTDDDLYDTVIGYRGGNWIYEWATQAMVWQQKACAEDDPQLSGRHWLHAATLYNIAAYPHLKGDDLAEQAQALSNRAYEEAAQRLPGTMRQMEFTVPGGAPITGFLHMPKGDGPFPTVLMCGGLDAMQTDYYSLYERYFAPRGIAMLTIDMPSVGFSSKWKLTQDSSLLHQHVLKALPNVPWVDHTRVAAFGFRFGANVAVRLAYLESPRLKAVACLGPVVHTLLSDFKCQQQVPEMYLDVLASRLGMHDASDEALRVELNRYSLKVQGLLGRRCPTPMLSGYWKNDPFSPEEDSRLITSSSADGKLLEIPFNPVYRNFDKGLQEITDWIEKRLC</sequence>